<organism>
    <name type="scientific">Frog virus 3 (isolate Goorha)</name>
    <name type="common">FV-3</name>
    <dbReference type="NCBI Taxonomy" id="654924"/>
    <lineage>
        <taxon>Viruses</taxon>
        <taxon>Varidnaviria</taxon>
        <taxon>Bamfordvirae</taxon>
        <taxon>Nucleocytoviricota</taxon>
        <taxon>Megaviricetes</taxon>
        <taxon>Pimascovirales</taxon>
        <taxon>Iridoviridae</taxon>
        <taxon>Alphairidovirinae</taxon>
        <taxon>Ranavirus</taxon>
        <taxon>Frog virus 3</taxon>
    </lineage>
</organism>
<gene>
    <name type="ORF">FV3-036L</name>
</gene>
<protein>
    <recommendedName>
        <fullName>Uncharacterized protein 036L</fullName>
    </recommendedName>
</protein>
<proteinExistence type="predicted"/>
<keyword id="KW-1185">Reference proteome</keyword>
<accession>Q6GZU0</accession>
<reference key="1">
    <citation type="journal article" date="2004" name="Virology">
        <title>Comparative genomic analyses of frog virus 3, type species of the genus Ranavirus (family Iridoviridae).</title>
        <authorList>
            <person name="Tan W.G."/>
            <person name="Barkman T.J."/>
            <person name="Gregory Chinchar V."/>
            <person name="Essani K."/>
        </authorList>
    </citation>
    <scope>NUCLEOTIDE SEQUENCE [LARGE SCALE GENOMIC DNA]</scope>
</reference>
<feature type="chain" id="PRO_0000410550" description="Uncharacterized protein 036L">
    <location>
        <begin position="1"/>
        <end position="207"/>
    </location>
</feature>
<organismHost>
    <name type="scientific">Dryophytes versicolor</name>
    <name type="common">chameleon treefrog</name>
    <dbReference type="NCBI Taxonomy" id="30343"/>
</organismHost>
<organismHost>
    <name type="scientific">Lithobates pipiens</name>
    <name type="common">Northern leopard frog</name>
    <name type="synonym">Rana pipiens</name>
    <dbReference type="NCBI Taxonomy" id="8404"/>
</organismHost>
<organismHost>
    <name type="scientific">Lithobates sylvaticus</name>
    <name type="common">Wood frog</name>
    <name type="synonym">Rana sylvatica</name>
    <dbReference type="NCBI Taxonomy" id="45438"/>
</organismHost>
<organismHost>
    <name type="scientific">Notophthalmus viridescens</name>
    <name type="common">Eastern newt</name>
    <name type="synonym">Triturus viridescens</name>
    <dbReference type="NCBI Taxonomy" id="8316"/>
</organismHost>
<name>036L_FRG3G</name>
<dbReference type="EMBL" id="AY548484">
    <property type="protein sequence ID" value="AAT09695.1"/>
    <property type="molecule type" value="Genomic_DNA"/>
</dbReference>
<dbReference type="RefSeq" id="YP_031614.1">
    <property type="nucleotide sequence ID" value="NC_005946.1"/>
</dbReference>
<dbReference type="KEGG" id="vg:2947815"/>
<dbReference type="Proteomes" id="UP000008770">
    <property type="component" value="Segment"/>
</dbReference>
<sequence>MTLPDVSGSLGPLSPGTNGTLWAVGPRVVRYQIPALAYLTPGALWTLRTRGTSLTSGPIGTRDSIRTLHAVHYDVWTLGPLGPLGPTSPRGPSARPCRLQTDSLHSTDARCYRCKMLQMQDATDARCKKDMSPFSFPGILEPSHLVGSLKSPRVDPGVPCRPLALWGHPYQCLRLVPLYQRCLHPHCFPAAPGRPWDPWCRPDRLDP</sequence>